<evidence type="ECO:0000255" key="1">
    <source>
        <dbReference type="HAMAP-Rule" id="MF_00315"/>
    </source>
</evidence>
<reference key="1">
    <citation type="journal article" date="2008" name="J. Bacteriol.">
        <title>The pangenome structure of Escherichia coli: comparative genomic analysis of E. coli commensal and pathogenic isolates.</title>
        <authorList>
            <person name="Rasko D.A."/>
            <person name="Rosovitz M.J."/>
            <person name="Myers G.S.A."/>
            <person name="Mongodin E.F."/>
            <person name="Fricke W.F."/>
            <person name="Gajer P."/>
            <person name="Crabtree J."/>
            <person name="Sebaihia M."/>
            <person name="Thomson N.R."/>
            <person name="Chaudhuri R."/>
            <person name="Henderson I.R."/>
            <person name="Sperandio V."/>
            <person name="Ravel J."/>
        </authorList>
    </citation>
    <scope>NUCLEOTIDE SEQUENCE [LARGE SCALE GENOMIC DNA]</scope>
    <source>
        <strain>E24377A / ETEC</strain>
    </source>
</reference>
<feature type="chain" id="PRO_1000059445" description="1-deoxy-D-xylulose-5-phosphate synthase">
    <location>
        <begin position="1"/>
        <end position="620"/>
    </location>
</feature>
<feature type="binding site" evidence="1">
    <location>
        <position position="80"/>
    </location>
    <ligand>
        <name>thiamine diphosphate</name>
        <dbReference type="ChEBI" id="CHEBI:58937"/>
    </ligand>
</feature>
<feature type="binding site" evidence="1">
    <location>
        <begin position="121"/>
        <end position="123"/>
    </location>
    <ligand>
        <name>thiamine diphosphate</name>
        <dbReference type="ChEBI" id="CHEBI:58937"/>
    </ligand>
</feature>
<feature type="binding site" evidence="1">
    <location>
        <position position="152"/>
    </location>
    <ligand>
        <name>Mg(2+)</name>
        <dbReference type="ChEBI" id="CHEBI:18420"/>
    </ligand>
</feature>
<feature type="binding site" evidence="1">
    <location>
        <begin position="153"/>
        <end position="154"/>
    </location>
    <ligand>
        <name>thiamine diphosphate</name>
        <dbReference type="ChEBI" id="CHEBI:58937"/>
    </ligand>
</feature>
<feature type="binding site" evidence="1">
    <location>
        <position position="181"/>
    </location>
    <ligand>
        <name>Mg(2+)</name>
        <dbReference type="ChEBI" id="CHEBI:18420"/>
    </ligand>
</feature>
<feature type="binding site" evidence="1">
    <location>
        <position position="181"/>
    </location>
    <ligand>
        <name>thiamine diphosphate</name>
        <dbReference type="ChEBI" id="CHEBI:58937"/>
    </ligand>
</feature>
<feature type="binding site" evidence="1">
    <location>
        <position position="288"/>
    </location>
    <ligand>
        <name>thiamine diphosphate</name>
        <dbReference type="ChEBI" id="CHEBI:58937"/>
    </ligand>
</feature>
<feature type="binding site" evidence="1">
    <location>
        <position position="370"/>
    </location>
    <ligand>
        <name>thiamine diphosphate</name>
        <dbReference type="ChEBI" id="CHEBI:58937"/>
    </ligand>
</feature>
<organism>
    <name type="scientific">Escherichia coli O139:H28 (strain E24377A / ETEC)</name>
    <dbReference type="NCBI Taxonomy" id="331111"/>
    <lineage>
        <taxon>Bacteria</taxon>
        <taxon>Pseudomonadati</taxon>
        <taxon>Pseudomonadota</taxon>
        <taxon>Gammaproteobacteria</taxon>
        <taxon>Enterobacterales</taxon>
        <taxon>Enterobacteriaceae</taxon>
        <taxon>Escherichia</taxon>
    </lineage>
</organism>
<gene>
    <name evidence="1" type="primary">dxs</name>
    <name type="ordered locus">EcE24377A_0451</name>
</gene>
<accession>A7ZIH3</accession>
<comment type="function">
    <text evidence="1">Catalyzes the acyloin condensation reaction between C atoms 2 and 3 of pyruvate and glyceraldehyde 3-phosphate to yield 1-deoxy-D-xylulose-5-phosphate (DXP).</text>
</comment>
<comment type="catalytic activity">
    <reaction evidence="1">
        <text>D-glyceraldehyde 3-phosphate + pyruvate + H(+) = 1-deoxy-D-xylulose 5-phosphate + CO2</text>
        <dbReference type="Rhea" id="RHEA:12605"/>
        <dbReference type="ChEBI" id="CHEBI:15361"/>
        <dbReference type="ChEBI" id="CHEBI:15378"/>
        <dbReference type="ChEBI" id="CHEBI:16526"/>
        <dbReference type="ChEBI" id="CHEBI:57792"/>
        <dbReference type="ChEBI" id="CHEBI:59776"/>
        <dbReference type="EC" id="2.2.1.7"/>
    </reaction>
</comment>
<comment type="cofactor">
    <cofactor evidence="1">
        <name>Mg(2+)</name>
        <dbReference type="ChEBI" id="CHEBI:18420"/>
    </cofactor>
    <text evidence="1">Binds 1 Mg(2+) ion per subunit.</text>
</comment>
<comment type="cofactor">
    <cofactor evidence="1">
        <name>thiamine diphosphate</name>
        <dbReference type="ChEBI" id="CHEBI:58937"/>
    </cofactor>
    <text evidence="1">Binds 1 thiamine pyrophosphate per subunit.</text>
</comment>
<comment type="pathway">
    <text evidence="1">Metabolic intermediate biosynthesis; 1-deoxy-D-xylulose 5-phosphate biosynthesis; 1-deoxy-D-xylulose 5-phosphate from D-glyceraldehyde 3-phosphate and pyruvate: step 1/1.</text>
</comment>
<comment type="subunit">
    <text evidence="1">Homodimer.</text>
</comment>
<comment type="similarity">
    <text evidence="1">Belongs to the transketolase family. DXPS subfamily.</text>
</comment>
<protein>
    <recommendedName>
        <fullName evidence="1">1-deoxy-D-xylulose-5-phosphate synthase</fullName>
        <ecNumber evidence="1">2.2.1.7</ecNumber>
    </recommendedName>
    <alternativeName>
        <fullName evidence="1">1-deoxyxylulose-5-phosphate synthase</fullName>
        <shortName evidence="1">DXP synthase</shortName>
        <shortName evidence="1">DXPS</shortName>
    </alternativeName>
</protein>
<name>DXS_ECO24</name>
<keyword id="KW-0414">Isoprene biosynthesis</keyword>
<keyword id="KW-0460">Magnesium</keyword>
<keyword id="KW-0479">Metal-binding</keyword>
<keyword id="KW-1185">Reference proteome</keyword>
<keyword id="KW-0784">Thiamine biosynthesis</keyword>
<keyword id="KW-0786">Thiamine pyrophosphate</keyword>
<keyword id="KW-0808">Transferase</keyword>
<sequence>MSFDIAKYPTLALVDSTQELRLLPKESLPKLCDELRRYLLDSVSRSSGHFASGLGTVELTVALHYVYNTPFDQLIWDVGHQAYPHKILTGRRDKIGTIRQKGGLHPFPWRGESEYDVLSVGHSSTSISAGIGIAVAAEKEGKNRRTVCVIGDGAITAGMAFEAMNHAGDIRPDMLVVLNDNEMSISENVGALNNHLAQLLSGKLYSSLREGGKKVFSGVPPIKELLKRTEEHIKGMVVPGTLFEELGFNYIGPVDGHDVLGLITTLKNMRDLKGPQFLHIMTKKGRGYEPAEKDPITFHAVPKFDPSSGCLPKSSGGLPSYSKIFGDWLCETAAKDNKLMAITPAMREGSGMVEFSRKFPDRYFDVAIAEQHAVTFAAGLAIGGYKPIVAIYSTFLQRAYDQVLHDVAIQKLPVLFAIDRAGIVGADGQTHQGAFDLSYLRCIPEMVIMTPSDENECRQMLYTGYHYNDGPSAVRYPRGNAVGVELTPLEKLPIGKGIVKRRGEKLAILNFGTLMPDAAKVAESLNATLVDMRFVKPLDEALILEMAASHEALVTVEENAIMGGAGSGVNEVLMAHRKPVPVLNIGLPDFFIPQGTQEEMRAELGLDAAGMEAKIKAWLA</sequence>
<proteinExistence type="inferred from homology"/>
<dbReference type="EC" id="2.2.1.7" evidence="1"/>
<dbReference type="EMBL" id="CP000800">
    <property type="protein sequence ID" value="ABV20138.1"/>
    <property type="molecule type" value="Genomic_DNA"/>
</dbReference>
<dbReference type="RefSeq" id="WP_000006806.1">
    <property type="nucleotide sequence ID" value="NC_009801.1"/>
</dbReference>
<dbReference type="SMR" id="A7ZIH3"/>
<dbReference type="KEGG" id="ecw:EcE24377A_0451"/>
<dbReference type="HOGENOM" id="CLU_009227_1_4_6"/>
<dbReference type="UniPathway" id="UPA00064">
    <property type="reaction ID" value="UER00091"/>
</dbReference>
<dbReference type="Proteomes" id="UP000001122">
    <property type="component" value="Chromosome"/>
</dbReference>
<dbReference type="GO" id="GO:0005829">
    <property type="term" value="C:cytosol"/>
    <property type="evidence" value="ECO:0007669"/>
    <property type="project" value="TreeGrafter"/>
</dbReference>
<dbReference type="GO" id="GO:0008661">
    <property type="term" value="F:1-deoxy-D-xylulose-5-phosphate synthase activity"/>
    <property type="evidence" value="ECO:0007669"/>
    <property type="project" value="UniProtKB-UniRule"/>
</dbReference>
<dbReference type="GO" id="GO:0000287">
    <property type="term" value="F:magnesium ion binding"/>
    <property type="evidence" value="ECO:0007669"/>
    <property type="project" value="UniProtKB-UniRule"/>
</dbReference>
<dbReference type="GO" id="GO:0030976">
    <property type="term" value="F:thiamine pyrophosphate binding"/>
    <property type="evidence" value="ECO:0007669"/>
    <property type="project" value="UniProtKB-UniRule"/>
</dbReference>
<dbReference type="GO" id="GO:0052865">
    <property type="term" value="P:1-deoxy-D-xylulose 5-phosphate biosynthetic process"/>
    <property type="evidence" value="ECO:0007669"/>
    <property type="project" value="UniProtKB-UniPathway"/>
</dbReference>
<dbReference type="GO" id="GO:0019288">
    <property type="term" value="P:isopentenyl diphosphate biosynthetic process, methylerythritol 4-phosphate pathway"/>
    <property type="evidence" value="ECO:0007669"/>
    <property type="project" value="TreeGrafter"/>
</dbReference>
<dbReference type="GO" id="GO:0016114">
    <property type="term" value="P:terpenoid biosynthetic process"/>
    <property type="evidence" value="ECO:0007669"/>
    <property type="project" value="UniProtKB-UniRule"/>
</dbReference>
<dbReference type="GO" id="GO:0009228">
    <property type="term" value="P:thiamine biosynthetic process"/>
    <property type="evidence" value="ECO:0007669"/>
    <property type="project" value="UniProtKB-UniRule"/>
</dbReference>
<dbReference type="CDD" id="cd02007">
    <property type="entry name" value="TPP_DXS"/>
    <property type="match status" value="1"/>
</dbReference>
<dbReference type="CDD" id="cd07033">
    <property type="entry name" value="TPP_PYR_DXS_TK_like"/>
    <property type="match status" value="1"/>
</dbReference>
<dbReference type="FunFam" id="3.40.50.920:FF:000002">
    <property type="entry name" value="1-deoxy-D-xylulose-5-phosphate synthase"/>
    <property type="match status" value="1"/>
</dbReference>
<dbReference type="FunFam" id="3.40.50.970:FF:000005">
    <property type="entry name" value="1-deoxy-D-xylulose-5-phosphate synthase"/>
    <property type="match status" value="1"/>
</dbReference>
<dbReference type="Gene3D" id="3.40.50.920">
    <property type="match status" value="1"/>
</dbReference>
<dbReference type="Gene3D" id="3.40.50.970">
    <property type="match status" value="2"/>
</dbReference>
<dbReference type="HAMAP" id="MF_00315">
    <property type="entry name" value="DXP_synth"/>
    <property type="match status" value="1"/>
</dbReference>
<dbReference type="InterPro" id="IPR005477">
    <property type="entry name" value="Dxylulose-5-P_synthase"/>
</dbReference>
<dbReference type="InterPro" id="IPR029061">
    <property type="entry name" value="THDP-binding"/>
</dbReference>
<dbReference type="InterPro" id="IPR009014">
    <property type="entry name" value="Transketo_C/PFOR_II"/>
</dbReference>
<dbReference type="InterPro" id="IPR005475">
    <property type="entry name" value="Transketolase-like_Pyr-bd"/>
</dbReference>
<dbReference type="InterPro" id="IPR020826">
    <property type="entry name" value="Transketolase_BS"/>
</dbReference>
<dbReference type="InterPro" id="IPR033248">
    <property type="entry name" value="Transketolase_C"/>
</dbReference>
<dbReference type="InterPro" id="IPR049557">
    <property type="entry name" value="Transketolase_CS"/>
</dbReference>
<dbReference type="NCBIfam" id="TIGR00204">
    <property type="entry name" value="dxs"/>
    <property type="match status" value="1"/>
</dbReference>
<dbReference type="NCBIfam" id="NF003933">
    <property type="entry name" value="PRK05444.2-2"/>
    <property type="match status" value="1"/>
</dbReference>
<dbReference type="PANTHER" id="PTHR43322">
    <property type="entry name" value="1-D-DEOXYXYLULOSE 5-PHOSPHATE SYNTHASE-RELATED"/>
    <property type="match status" value="1"/>
</dbReference>
<dbReference type="PANTHER" id="PTHR43322:SF5">
    <property type="entry name" value="1-DEOXY-D-XYLULOSE-5-PHOSPHATE SYNTHASE, CHLOROPLASTIC"/>
    <property type="match status" value="1"/>
</dbReference>
<dbReference type="Pfam" id="PF13292">
    <property type="entry name" value="DXP_synthase_N"/>
    <property type="match status" value="1"/>
</dbReference>
<dbReference type="Pfam" id="PF02779">
    <property type="entry name" value="Transket_pyr"/>
    <property type="match status" value="1"/>
</dbReference>
<dbReference type="Pfam" id="PF02780">
    <property type="entry name" value="Transketolase_C"/>
    <property type="match status" value="1"/>
</dbReference>
<dbReference type="SMART" id="SM00861">
    <property type="entry name" value="Transket_pyr"/>
    <property type="match status" value="1"/>
</dbReference>
<dbReference type="SUPFAM" id="SSF52518">
    <property type="entry name" value="Thiamin diphosphate-binding fold (THDP-binding)"/>
    <property type="match status" value="2"/>
</dbReference>
<dbReference type="SUPFAM" id="SSF52922">
    <property type="entry name" value="TK C-terminal domain-like"/>
    <property type="match status" value="1"/>
</dbReference>
<dbReference type="PROSITE" id="PS00801">
    <property type="entry name" value="TRANSKETOLASE_1"/>
    <property type="match status" value="1"/>
</dbReference>
<dbReference type="PROSITE" id="PS00802">
    <property type="entry name" value="TRANSKETOLASE_2"/>
    <property type="match status" value="1"/>
</dbReference>